<sequence>MKLEMICTGEEVLSGQIVDTNAAWFASTMMEHGIEIQRRVTVGDRLEDLIAVFQERSLHADVILVNGGLGPTSDDMSAEAMAKAKGESLVENSEWRQRLEDWFTRNNREMPVSNLKQAMLPVSAVMVDNPVGTACGFRVKLNRAWLFFTPGVPFELKHMVKEQFIPFIRDEFNLDAKVALKKLLTIGHGESALADKIEPLELPEGITIGYRSSMPHIEIKIFARGEKAIALLPRVAGHIKMVLGTAVVAEDKATLAEEIHFRLLNSGLTLSAAESCTGGMITSQLVDFPGSSSYLQHGLVTYSNESKVRVLGVNPATLDDHGAVSIPTVEEMAKGARAILDSDFALATSGIAGPDGGTEDKPVGTVAIALATRSGVYSQMIKLPRRSRDLVRSLSAAVAYDMLRRELLSEAVIVDYQSIGRFSK</sequence>
<evidence type="ECO:0000255" key="1">
    <source>
        <dbReference type="HAMAP-Rule" id="MF_00226"/>
    </source>
</evidence>
<evidence type="ECO:0000269" key="2">
    <source>
    </source>
</evidence>
<evidence type="ECO:0000305" key="3">
    <source>
    </source>
</evidence>
<keyword id="KW-0903">Direct protein sequencing</keyword>
<keyword id="KW-0378">Hydrolase</keyword>
<keyword id="KW-0662">Pyridine nucleotide biosynthesis</keyword>
<keyword id="KW-1185">Reference proteome</keyword>
<dbReference type="EC" id="3.5.1.42"/>
<dbReference type="EMBL" id="AE014299">
    <property type="protein sequence ID" value="AAN53357.1"/>
    <property type="molecule type" value="Genomic_DNA"/>
</dbReference>
<dbReference type="RefSeq" id="NP_715912.1">
    <property type="nucleotide sequence ID" value="NC_004347.2"/>
</dbReference>
<dbReference type="RefSeq" id="WP_011070644.1">
    <property type="nucleotide sequence ID" value="NC_004347.2"/>
</dbReference>
<dbReference type="SMR" id="Q8EK32"/>
<dbReference type="STRING" id="211586.SO_0272"/>
<dbReference type="PaxDb" id="211586-SO_0272"/>
<dbReference type="KEGG" id="son:SO_0272"/>
<dbReference type="PATRIC" id="fig|211586.12.peg.263"/>
<dbReference type="eggNOG" id="COG1058">
    <property type="taxonomic scope" value="Bacteria"/>
</dbReference>
<dbReference type="eggNOG" id="COG1546">
    <property type="taxonomic scope" value="Bacteria"/>
</dbReference>
<dbReference type="HOGENOM" id="CLU_030805_9_2_6"/>
<dbReference type="OrthoDB" id="9801454at2"/>
<dbReference type="PhylomeDB" id="Q8EK32"/>
<dbReference type="BioCyc" id="SONE211586:G1GMP-262-MONOMER"/>
<dbReference type="Proteomes" id="UP000008186">
    <property type="component" value="Chromosome"/>
</dbReference>
<dbReference type="GO" id="GO:0019159">
    <property type="term" value="F:nicotinamide-nucleotide amidase activity"/>
    <property type="evidence" value="ECO:0007669"/>
    <property type="project" value="UniProtKB-EC"/>
</dbReference>
<dbReference type="GO" id="GO:0019363">
    <property type="term" value="P:pyridine nucleotide biosynthetic process"/>
    <property type="evidence" value="ECO:0007669"/>
    <property type="project" value="UniProtKB-KW"/>
</dbReference>
<dbReference type="CDD" id="cd00885">
    <property type="entry name" value="cinA"/>
    <property type="match status" value="1"/>
</dbReference>
<dbReference type="Gene3D" id="3.30.70.2860">
    <property type="match status" value="1"/>
</dbReference>
<dbReference type="Gene3D" id="3.90.950.20">
    <property type="entry name" value="CinA-like"/>
    <property type="match status" value="1"/>
</dbReference>
<dbReference type="Gene3D" id="3.40.980.10">
    <property type="entry name" value="MoaB/Mog-like domain"/>
    <property type="match status" value="1"/>
</dbReference>
<dbReference type="HAMAP" id="MF_00226_B">
    <property type="entry name" value="CinA_B"/>
    <property type="match status" value="1"/>
</dbReference>
<dbReference type="InterPro" id="IPR050101">
    <property type="entry name" value="CinA"/>
</dbReference>
<dbReference type="InterPro" id="IPR036653">
    <property type="entry name" value="CinA-like_C"/>
</dbReference>
<dbReference type="InterPro" id="IPR008136">
    <property type="entry name" value="CinA_C"/>
</dbReference>
<dbReference type="InterPro" id="IPR008135">
    <property type="entry name" value="Competence-induced_CinA"/>
</dbReference>
<dbReference type="InterPro" id="IPR036425">
    <property type="entry name" value="MoaB/Mog-like_dom_sf"/>
</dbReference>
<dbReference type="InterPro" id="IPR001453">
    <property type="entry name" value="MoaB/Mog_dom"/>
</dbReference>
<dbReference type="NCBIfam" id="TIGR00200">
    <property type="entry name" value="cinA_nterm"/>
    <property type="match status" value="1"/>
</dbReference>
<dbReference type="NCBIfam" id="TIGR00177">
    <property type="entry name" value="molyb_syn"/>
    <property type="match status" value="1"/>
</dbReference>
<dbReference type="NCBIfam" id="TIGR00199">
    <property type="entry name" value="PncC_domain"/>
    <property type="match status" value="1"/>
</dbReference>
<dbReference type="PANTHER" id="PTHR13939">
    <property type="entry name" value="NICOTINAMIDE-NUCLEOTIDE AMIDOHYDROLASE PNCC"/>
    <property type="match status" value="1"/>
</dbReference>
<dbReference type="PANTHER" id="PTHR13939:SF0">
    <property type="entry name" value="NMN AMIDOHYDROLASE-LIKE PROTEIN YFAY"/>
    <property type="match status" value="1"/>
</dbReference>
<dbReference type="Pfam" id="PF02464">
    <property type="entry name" value="CinA"/>
    <property type="match status" value="1"/>
</dbReference>
<dbReference type="Pfam" id="PF00994">
    <property type="entry name" value="MoCF_biosynth"/>
    <property type="match status" value="1"/>
</dbReference>
<dbReference type="PIRSF" id="PIRSF006728">
    <property type="entry name" value="CinA"/>
    <property type="match status" value="1"/>
</dbReference>
<dbReference type="SMART" id="SM00852">
    <property type="entry name" value="MoCF_biosynth"/>
    <property type="match status" value="1"/>
</dbReference>
<dbReference type="SUPFAM" id="SSF142433">
    <property type="entry name" value="CinA-like"/>
    <property type="match status" value="1"/>
</dbReference>
<dbReference type="SUPFAM" id="SSF53218">
    <property type="entry name" value="Molybdenum cofactor biosynthesis proteins"/>
    <property type="match status" value="1"/>
</dbReference>
<organism>
    <name type="scientific">Shewanella oneidensis (strain ATCC 700550 / JCM 31522 / CIP 106686 / LMG 19005 / NCIMB 14063 / MR-1)</name>
    <dbReference type="NCBI Taxonomy" id="211586"/>
    <lineage>
        <taxon>Bacteria</taxon>
        <taxon>Pseudomonadati</taxon>
        <taxon>Pseudomonadota</taxon>
        <taxon>Gammaproteobacteria</taxon>
        <taxon>Alteromonadales</taxon>
        <taxon>Shewanellaceae</taxon>
        <taxon>Shewanella</taxon>
    </lineage>
</organism>
<accession>Q8EK32</accession>
<proteinExistence type="evidence at protein level"/>
<comment type="function">
    <text evidence="2">One of the key enzymes of the pyridine nucleotide cycle which permits cells to recycle the by products of NAD consumption back to NAD. Has no activity on NAD, NADP, nicotinamide or nicotinamide riboside.</text>
</comment>
<comment type="catalytic activity">
    <reaction evidence="2">
        <text>beta-nicotinamide D-ribonucleotide + H2O = nicotinate beta-D-ribonucleotide + NH4(+)</text>
        <dbReference type="Rhea" id="RHEA:12400"/>
        <dbReference type="ChEBI" id="CHEBI:14649"/>
        <dbReference type="ChEBI" id="CHEBI:15377"/>
        <dbReference type="ChEBI" id="CHEBI:28938"/>
        <dbReference type="ChEBI" id="CHEBI:57502"/>
        <dbReference type="EC" id="3.5.1.42"/>
    </reaction>
</comment>
<comment type="biophysicochemical properties">
    <phDependence>
        <text evidence="2">Optimum pH is 5.5-9.0.</text>
    </phDependence>
</comment>
<comment type="subunit">
    <text evidence="3">Homodimer.</text>
</comment>
<comment type="disruption phenotype">
    <text evidence="2">Not essential for growth on defined medium, loss of NMN amidohydrolase activity.</text>
</comment>
<comment type="similarity">
    <text evidence="1">Belongs to the CinA family.</text>
</comment>
<name>PNCC_SHEON</name>
<reference key="1">
    <citation type="journal article" date="2002" name="Nat. Biotechnol.">
        <title>Genome sequence of the dissimilatory metal ion-reducing bacterium Shewanella oneidensis.</title>
        <authorList>
            <person name="Heidelberg J.F."/>
            <person name="Paulsen I.T."/>
            <person name="Nelson K.E."/>
            <person name="Gaidos E.J."/>
            <person name="Nelson W.C."/>
            <person name="Read T.D."/>
            <person name="Eisen J.A."/>
            <person name="Seshadri R."/>
            <person name="Ward N.L."/>
            <person name="Methe B.A."/>
            <person name="Clayton R.A."/>
            <person name="Meyer T."/>
            <person name="Tsapin A."/>
            <person name="Scott J."/>
            <person name="Beanan M.J."/>
            <person name="Brinkac L.M."/>
            <person name="Daugherty S.C."/>
            <person name="DeBoy R.T."/>
            <person name="Dodson R.J."/>
            <person name="Durkin A.S."/>
            <person name="Haft D.H."/>
            <person name="Kolonay J.F."/>
            <person name="Madupu R."/>
            <person name="Peterson J.D."/>
            <person name="Umayam L.A."/>
            <person name="White O."/>
            <person name="Wolf A.M."/>
            <person name="Vamathevan J.J."/>
            <person name="Weidman J.F."/>
            <person name="Impraim M."/>
            <person name="Lee K."/>
            <person name="Berry K.J."/>
            <person name="Lee C."/>
            <person name="Mueller J."/>
            <person name="Khouri H.M."/>
            <person name="Gill J."/>
            <person name="Utterback T.R."/>
            <person name="McDonald L.A."/>
            <person name="Feldblyum T.V."/>
            <person name="Smith H.O."/>
            <person name="Venter J.C."/>
            <person name="Nealson K.H."/>
            <person name="Fraser C.M."/>
        </authorList>
    </citation>
    <scope>NUCLEOTIDE SEQUENCE [LARGE SCALE GENOMIC DNA]</scope>
    <source>
        <strain>ATCC 700550 / JCM 31522 / CIP 106686 / LMG 19005 / NCIMB 14063 / MR-1</strain>
    </source>
</reference>
<reference key="2">
    <citation type="journal article" date="2011" name="J. Biol. Chem.">
        <title>Identification of nicotinamide mononucleotide deamidase of the bacterial pyridine nucleotide cycle reveals a novel broadly conserved amidohydrolase family.</title>
        <authorList>
            <person name="Galeazzi L."/>
            <person name="Bocci P."/>
            <person name="Amici A."/>
            <person name="Brunetti L."/>
            <person name="Ruggieri S."/>
            <person name="Romine M."/>
            <person name="Reed S."/>
            <person name="Osterman A.L."/>
            <person name="Rodionov D.A."/>
            <person name="Sorci L."/>
            <person name="Raffaelli N."/>
        </authorList>
    </citation>
    <scope>PROTEIN SEQUENCE OF 1-14</scope>
    <scope>CATALYTIC ACTIVITY</scope>
    <scope>BIOPHYSICOCHEMICAL PROPERTIES</scope>
    <scope>SUBUNIT</scope>
    <scope>DISRUPTION PHENOTYPE</scope>
    <scope>FUNCTION</scope>
    <source>
        <strain>ATCC 700550 / JCM 31522 / CIP 106686 / LMG 19005 / NCIMB 14063 / MR-1</strain>
    </source>
</reference>
<protein>
    <recommendedName>
        <fullName>Nicotinamide-nucleotide amidohydrolase PncC</fullName>
        <shortName>NMN amidohydrolase PncC</shortName>
        <ecNumber>3.5.1.42</ecNumber>
    </recommendedName>
    <alternativeName>
        <fullName>NMN deamidase</fullName>
    </alternativeName>
    <alternativeName>
        <fullName>Nicotinamide-nucleotide amidase</fullName>
    </alternativeName>
</protein>
<gene>
    <name type="primary">pncC</name>
    <name type="ordered locus">SO_0272</name>
</gene>
<feature type="chain" id="PRO_0000336525" description="Nicotinamide-nucleotide amidohydrolase PncC">
    <location>
        <begin position="1"/>
        <end position="424"/>
    </location>
</feature>